<proteinExistence type="evidence at protein level"/>
<reference key="1">
    <citation type="journal article" date="1993" name="J. Biol. Chem.">
        <title>A serum-derived hyaluronan-associated protein (SHAP) is the heavy chain of the inter alpha-trypsin inhibitor.</title>
        <authorList>
            <person name="Huang L."/>
            <person name="Yoneda M."/>
            <person name="Kimata K."/>
        </authorList>
    </citation>
    <scope>PROTEIN SEQUENCE</scope>
    <source>
        <tissue>Serum</tissue>
    </source>
</reference>
<name>ITIH2_BOVIN</name>
<protein>
    <recommendedName>
        <fullName>Inter-alpha-trypsin inhibitor heavy chain H2</fullName>
        <shortName>ITI heavy chain H2</shortName>
        <shortName>ITI-HC2</shortName>
        <shortName>Inter-alpha-inhibitor heavy chain 2</shortName>
    </recommendedName>
</protein>
<feature type="chain" id="PRO_0000140899" description="Inter-alpha-trypsin inhibitor heavy chain H2">
    <location>
        <begin position="1" status="less than"/>
        <end position="50" status="greater than"/>
    </location>
</feature>
<feature type="non-consecutive residues" evidence="3">
    <location>
        <begin position="28"/>
        <end position="29"/>
    </location>
</feature>
<feature type="non-terminal residue">
    <location>
        <position position="1"/>
    </location>
</feature>
<feature type="non-terminal residue">
    <location>
        <position position="50"/>
    </location>
</feature>
<gene>
    <name type="primary">ITIH2</name>
</gene>
<dbReference type="eggNOG" id="ENOG502QPS2">
    <property type="taxonomic scope" value="Eukaryota"/>
</dbReference>
<dbReference type="InParanoid" id="P56651"/>
<dbReference type="OrthoDB" id="299997at2759"/>
<dbReference type="Proteomes" id="UP000009136">
    <property type="component" value="Unplaced"/>
</dbReference>
<dbReference type="GO" id="GO:0005576">
    <property type="term" value="C:extracellular region"/>
    <property type="evidence" value="ECO:0007669"/>
    <property type="project" value="UniProtKB-SubCell"/>
</dbReference>
<dbReference type="GO" id="GO:0004867">
    <property type="term" value="F:serine-type endopeptidase inhibitor activity"/>
    <property type="evidence" value="ECO:0007669"/>
    <property type="project" value="UniProtKB-KW"/>
</dbReference>
<accession>P56651</accession>
<comment type="function">
    <text evidence="1">May act as a carrier of hyaluronan in serum or as a binding protein between hyaluronan and other matrix protein, including those on cell surfaces in tissues to regulate the localization, synthesis and degradation of hyaluronan which are essential to cells undergoing biological processes.</text>
</comment>
<comment type="subunit">
    <text evidence="2">I-alpha-I plasma protease inhibitors are assembled from one or two heavy chains (HC) and one light chain, bikunin. Inter-alpha-inhibitor (I-alpha-I) is composed of ITIH1/HC1, ITIH2/HC2 and bikunin.</text>
</comment>
<comment type="subcellular location">
    <subcellularLocation>
        <location>Secreted</location>
    </subcellularLocation>
</comment>
<comment type="PTM">
    <text evidence="2">Phosphorylated by FAM20C in the extracellular medium.</text>
</comment>
<comment type="similarity">
    <text evidence="3">Belongs to the ITIH family.</text>
</comment>
<keyword id="KW-0903">Direct protein sequencing</keyword>
<keyword id="KW-0646">Protease inhibitor</keyword>
<keyword id="KW-1185">Reference proteome</keyword>
<keyword id="KW-0964">Secreted</keyword>
<keyword id="KW-0722">Serine protease inhibitor</keyword>
<evidence type="ECO:0000250" key="1"/>
<evidence type="ECO:0000250" key="2">
    <source>
        <dbReference type="UniProtKB" id="P19823"/>
    </source>
</evidence>
<evidence type="ECO:0000305" key="3"/>
<sequence length="50" mass="5984">LHYQEVKWRKLGSYEHRLHLKPGRLAKHELEVFNGYFVHFPAPENMIPIG</sequence>
<organism>
    <name type="scientific">Bos taurus</name>
    <name type="common">Bovine</name>
    <dbReference type="NCBI Taxonomy" id="9913"/>
    <lineage>
        <taxon>Eukaryota</taxon>
        <taxon>Metazoa</taxon>
        <taxon>Chordata</taxon>
        <taxon>Craniata</taxon>
        <taxon>Vertebrata</taxon>
        <taxon>Euteleostomi</taxon>
        <taxon>Mammalia</taxon>
        <taxon>Eutheria</taxon>
        <taxon>Laurasiatheria</taxon>
        <taxon>Artiodactyla</taxon>
        <taxon>Ruminantia</taxon>
        <taxon>Pecora</taxon>
        <taxon>Bovidae</taxon>
        <taxon>Bovinae</taxon>
        <taxon>Bos</taxon>
    </lineage>
</organism>